<evidence type="ECO:0000250" key="1">
    <source>
        <dbReference type="UniProtKB" id="P04798"/>
    </source>
</evidence>
<evidence type="ECO:0000255" key="2"/>
<evidence type="ECO:0000256" key="3">
    <source>
        <dbReference type="SAM" id="MobiDB-lite"/>
    </source>
</evidence>
<evidence type="ECO:0000269" key="4">
    <source>
    </source>
</evidence>
<evidence type="ECO:0000303" key="5">
    <source>
    </source>
</evidence>
<evidence type="ECO:0000305" key="6"/>
<evidence type="ECO:0000305" key="7">
    <source>
    </source>
</evidence>
<reference key="1">
    <citation type="journal article" date="2020" name="J. Antibiot.">
        <title>Induction of secondary metabolite production by hygromycin B and identification of the 1233A biosynthetic gene cluster with a self-resistance gene.</title>
        <authorList>
            <person name="Kato S."/>
            <person name="Motoyama T."/>
            <person name="Uramoto M."/>
            <person name="Nogawa T."/>
            <person name="Kamakura T."/>
            <person name="Osada H."/>
        </authorList>
    </citation>
    <scope>NUCLEOTIDE SEQUENCE [GENOMIC DNA]</scope>
    <scope>FUNCTION</scope>
    <scope>INDUCTION</scope>
    <scope>DISRUPTION PHENOTYPE</scope>
    <scope>PATHWAY</scope>
    <source>
        <strain>RK97-94</strain>
    </source>
</reference>
<comment type="function">
    <text evidence="4 7">Cytochrome P450 monooxygenase; part of the gene cluster that mediates the biosynthesis of 1233A, a natural compound known as an inhibitor of HMG-CoA synthase in the mevalonate pathway and with antibacterial and antifungal activities (PubMed:32139880). The highly reducing polyketide synthase g433 is responsible for the 1233A backbone biosynthesis and the cytochrome P450 monooxygenase g430 catalyzes oxidation of the backbone (Probable).</text>
</comment>
<comment type="cofactor">
    <cofactor evidence="1">
        <name>heme</name>
        <dbReference type="ChEBI" id="CHEBI:30413"/>
    </cofactor>
</comment>
<comment type="pathway">
    <text evidence="4">Mycotoxin biosynthesis.</text>
</comment>
<comment type="subcellular location">
    <subcellularLocation>
        <location evidence="2">Membrane</location>
        <topology evidence="2">Single-pass membrane protein</topology>
    </subcellularLocation>
</comment>
<comment type="induction">
    <text evidence="4">Expression is increased upon exposure to hygromycin B.</text>
</comment>
<comment type="disruption phenotype">
    <text evidence="4">Impairs the ability to produce 1233A and its hydrolysis product 1233B.</text>
</comment>
<comment type="similarity">
    <text evidence="6">Belongs to the cytochrome P450 family.</text>
</comment>
<organism>
    <name type="scientific">Fusarium sp</name>
    <dbReference type="NCBI Taxonomy" id="29916"/>
    <lineage>
        <taxon>Eukaryota</taxon>
        <taxon>Fungi</taxon>
        <taxon>Dikarya</taxon>
        <taxon>Ascomycota</taxon>
        <taxon>Pezizomycotina</taxon>
        <taxon>Sordariomycetes</taxon>
        <taxon>Hypocreomycetidae</taxon>
        <taxon>Hypocreales</taxon>
        <taxon>Nectriaceae</taxon>
        <taxon>Fusarium</taxon>
    </lineage>
</organism>
<feature type="chain" id="PRO_0000454629" description="Cytochrome P450 monooxygenase g430">
    <location>
        <begin position="1"/>
        <end position="571"/>
    </location>
</feature>
<feature type="transmembrane region" description="Helical" evidence="2">
    <location>
        <begin position="8"/>
        <end position="28"/>
    </location>
</feature>
<feature type="region of interest" description="Disordered" evidence="3">
    <location>
        <begin position="552"/>
        <end position="571"/>
    </location>
</feature>
<feature type="binding site" description="axial binding residue" evidence="1">
    <location>
        <position position="471"/>
    </location>
    <ligand>
        <name>heme</name>
        <dbReference type="ChEBI" id="CHEBI:30413"/>
    </ligand>
    <ligandPart>
        <name>Fe</name>
        <dbReference type="ChEBI" id="CHEBI:18248"/>
    </ligandPart>
</feature>
<name>G430_FUSSX</name>
<dbReference type="EC" id="1.-.-.-" evidence="7"/>
<dbReference type="EMBL" id="LC516401">
    <property type="protein sequence ID" value="BBU37365.1"/>
    <property type="molecule type" value="Genomic_DNA"/>
</dbReference>
<dbReference type="SMR" id="A0A6S6AA17"/>
<dbReference type="GO" id="GO:0016020">
    <property type="term" value="C:membrane"/>
    <property type="evidence" value="ECO:0007669"/>
    <property type="project" value="UniProtKB-SubCell"/>
</dbReference>
<dbReference type="GO" id="GO:0020037">
    <property type="term" value="F:heme binding"/>
    <property type="evidence" value="ECO:0007669"/>
    <property type="project" value="InterPro"/>
</dbReference>
<dbReference type="GO" id="GO:0005506">
    <property type="term" value="F:iron ion binding"/>
    <property type="evidence" value="ECO:0007669"/>
    <property type="project" value="InterPro"/>
</dbReference>
<dbReference type="GO" id="GO:0016712">
    <property type="term" value="F:oxidoreductase activity, acting on paired donors, with incorporation or reduction of molecular oxygen, reduced flavin or flavoprotein as one donor, and incorporation of one atom of oxygen"/>
    <property type="evidence" value="ECO:0007669"/>
    <property type="project" value="InterPro"/>
</dbReference>
<dbReference type="CDD" id="cd11063">
    <property type="entry name" value="CYP52"/>
    <property type="match status" value="1"/>
</dbReference>
<dbReference type="Gene3D" id="1.10.630.10">
    <property type="entry name" value="Cytochrome P450"/>
    <property type="match status" value="1"/>
</dbReference>
<dbReference type="InterPro" id="IPR001128">
    <property type="entry name" value="Cyt_P450"/>
</dbReference>
<dbReference type="InterPro" id="IPR017972">
    <property type="entry name" value="Cyt_P450_CS"/>
</dbReference>
<dbReference type="InterPro" id="IPR002974">
    <property type="entry name" value="Cyt_P450_E_CYP52_ascomycetes"/>
</dbReference>
<dbReference type="InterPro" id="IPR047146">
    <property type="entry name" value="Cyt_P450_E_CYP52_fungi"/>
</dbReference>
<dbReference type="InterPro" id="IPR002402">
    <property type="entry name" value="Cyt_P450_E_grp-II"/>
</dbReference>
<dbReference type="InterPro" id="IPR036396">
    <property type="entry name" value="Cyt_P450_sf"/>
</dbReference>
<dbReference type="PANTHER" id="PTHR24287">
    <property type="entry name" value="P450, PUTATIVE (EUROFUNG)-RELATED"/>
    <property type="match status" value="1"/>
</dbReference>
<dbReference type="PANTHER" id="PTHR24287:SF1">
    <property type="entry name" value="P450, PUTATIVE (EUROFUNG)-RELATED"/>
    <property type="match status" value="1"/>
</dbReference>
<dbReference type="Pfam" id="PF00067">
    <property type="entry name" value="p450"/>
    <property type="match status" value="1"/>
</dbReference>
<dbReference type="PRINTS" id="PR00464">
    <property type="entry name" value="EP450II"/>
</dbReference>
<dbReference type="PRINTS" id="PR01239">
    <property type="entry name" value="EP450IICYP52"/>
</dbReference>
<dbReference type="PRINTS" id="PR00385">
    <property type="entry name" value="P450"/>
</dbReference>
<dbReference type="SUPFAM" id="SSF48264">
    <property type="entry name" value="Cytochrome P450"/>
    <property type="match status" value="1"/>
</dbReference>
<dbReference type="PROSITE" id="PS00086">
    <property type="entry name" value="CYTOCHROME_P450"/>
    <property type="match status" value="1"/>
</dbReference>
<protein>
    <recommendedName>
        <fullName evidence="5">Cytochrome P450 monooxygenase g430</fullName>
        <ecNumber evidence="7">1.-.-.-</ecNumber>
    </recommendedName>
    <alternativeName>
        <fullName evidence="5">1233A biosynthesis cluster protein g430</fullName>
    </alternativeName>
</protein>
<sequence length="571" mass="64978">MQISSAFGALIWVVTSYILYAIISNFIISRRHAAKARELKCEEPPFEKNRWPLGIDNLLRALAADKAQQFPVDIIKRFEDLGAHTYRYQILGARNIRTADPKNIQTILANKFNDFDVGPSRRGNFLPMLGNGIFTADGDHWKHSRAIIRPQFTRDQVSDLNLEETHVQNLMKLIGPMIGSNGWIEQIDLLPYFFRLTIDSATEFLFGEPVNSQLRFLPGYQSSKLGSKEERFATAFDSGQMALATRSRFMDSWWLYDSLAFRNSCKIVHDFVDHFVQLALSRGLREKVSDTNSGGKEQYIFLEAIAAETQNPTELRSELLHVLLAGRDTTASHLGWVFHNLARDPVRYKKLRDIIIDEFGTYENPSEITFAKLKACKYLRYVNDESLRLYPVVPINARYANKDTTLPRGGGKDGNSPIFIPKGSSTDFSVHVMHRRKDIWGPDADEFKPERWEGRKVGWEYLPFNGGPRICIGQQFALIEASYVTVRLLQRFDRMESLDKDAVVGHNLTLINCIANGVKTRSSIEFDGQTSQNDDQLRTIVEKPLVQKRSRCPLPAEAKLPKSRKPIGTAS</sequence>
<keyword id="KW-0349">Heme</keyword>
<keyword id="KW-0408">Iron</keyword>
<keyword id="KW-0472">Membrane</keyword>
<keyword id="KW-0479">Metal-binding</keyword>
<keyword id="KW-0503">Monooxygenase</keyword>
<keyword id="KW-0560">Oxidoreductase</keyword>
<keyword id="KW-0812">Transmembrane</keyword>
<keyword id="KW-1133">Transmembrane helix</keyword>
<gene>
    <name evidence="5" type="primary">g430</name>
</gene>
<proteinExistence type="evidence at transcript level"/>
<accession>A0A6S6AA17</accession>